<protein>
    <recommendedName>
        <fullName evidence="1">2-succinyl-5-enolpyruvyl-6-hydroxy-3-cyclohexene-1-carboxylate synthase</fullName>
        <shortName evidence="1">SEPHCHC synthase</shortName>
        <ecNumber evidence="1">2.2.1.9</ecNumber>
    </recommendedName>
    <alternativeName>
        <fullName evidence="1">Menaquinone biosynthesis protein MenD</fullName>
    </alternativeName>
</protein>
<keyword id="KW-0460">Magnesium</keyword>
<keyword id="KW-0464">Manganese</keyword>
<keyword id="KW-0474">Menaquinone biosynthesis</keyword>
<keyword id="KW-0479">Metal-binding</keyword>
<keyword id="KW-1185">Reference proteome</keyword>
<keyword id="KW-0786">Thiamine pyrophosphate</keyword>
<keyword id="KW-0808">Transferase</keyword>
<dbReference type="EC" id="2.2.1.9" evidence="1"/>
<dbReference type="EMBL" id="AM180088">
    <property type="protein sequence ID" value="CAJ52001.1"/>
    <property type="molecule type" value="Genomic_DNA"/>
</dbReference>
<dbReference type="RefSeq" id="WP_011571148.1">
    <property type="nucleotide sequence ID" value="NC_008212.1"/>
</dbReference>
<dbReference type="SMR" id="Q18J11"/>
<dbReference type="STRING" id="362976.HQ_1873A"/>
<dbReference type="GeneID" id="4194259"/>
<dbReference type="KEGG" id="hwa:HQ_1873A"/>
<dbReference type="eggNOG" id="arCOG04611">
    <property type="taxonomic scope" value="Archaea"/>
</dbReference>
<dbReference type="HOGENOM" id="CLU_006051_3_0_2"/>
<dbReference type="UniPathway" id="UPA00079"/>
<dbReference type="UniPathway" id="UPA01057">
    <property type="reaction ID" value="UER00164"/>
</dbReference>
<dbReference type="Proteomes" id="UP000001975">
    <property type="component" value="Chromosome"/>
</dbReference>
<dbReference type="GO" id="GO:0070204">
    <property type="term" value="F:2-succinyl-5-enolpyruvyl-6-hydroxy-3-cyclohexene-1-carboxylic-acid synthase activity"/>
    <property type="evidence" value="ECO:0007669"/>
    <property type="project" value="UniProtKB-UniRule"/>
</dbReference>
<dbReference type="GO" id="GO:0000287">
    <property type="term" value="F:magnesium ion binding"/>
    <property type="evidence" value="ECO:0007669"/>
    <property type="project" value="UniProtKB-UniRule"/>
</dbReference>
<dbReference type="GO" id="GO:0030145">
    <property type="term" value="F:manganese ion binding"/>
    <property type="evidence" value="ECO:0007669"/>
    <property type="project" value="UniProtKB-UniRule"/>
</dbReference>
<dbReference type="GO" id="GO:0030976">
    <property type="term" value="F:thiamine pyrophosphate binding"/>
    <property type="evidence" value="ECO:0007669"/>
    <property type="project" value="UniProtKB-UniRule"/>
</dbReference>
<dbReference type="GO" id="GO:0009234">
    <property type="term" value="P:menaquinone biosynthetic process"/>
    <property type="evidence" value="ECO:0007669"/>
    <property type="project" value="UniProtKB-UniRule"/>
</dbReference>
<dbReference type="GO" id="GO:0006082">
    <property type="term" value="P:organic acid metabolic process"/>
    <property type="evidence" value="ECO:0007669"/>
    <property type="project" value="UniProtKB-ARBA"/>
</dbReference>
<dbReference type="GO" id="GO:0044272">
    <property type="term" value="P:sulfur compound biosynthetic process"/>
    <property type="evidence" value="ECO:0007669"/>
    <property type="project" value="UniProtKB-ARBA"/>
</dbReference>
<dbReference type="CDD" id="cd07037">
    <property type="entry name" value="TPP_PYR_MenD"/>
    <property type="match status" value="1"/>
</dbReference>
<dbReference type="CDD" id="cd02009">
    <property type="entry name" value="TPP_SHCHC_synthase"/>
    <property type="match status" value="1"/>
</dbReference>
<dbReference type="Gene3D" id="3.40.50.970">
    <property type="match status" value="2"/>
</dbReference>
<dbReference type="Gene3D" id="3.40.50.1220">
    <property type="entry name" value="TPP-binding domain"/>
    <property type="match status" value="1"/>
</dbReference>
<dbReference type="HAMAP" id="MF_01659">
    <property type="entry name" value="MenD"/>
    <property type="match status" value="1"/>
</dbReference>
<dbReference type="InterPro" id="IPR029035">
    <property type="entry name" value="DHS-like_NAD/FAD-binding_dom"/>
</dbReference>
<dbReference type="InterPro" id="IPR004433">
    <property type="entry name" value="MenaQ_synth_MenD"/>
</dbReference>
<dbReference type="InterPro" id="IPR032264">
    <property type="entry name" value="MenD_middle"/>
</dbReference>
<dbReference type="InterPro" id="IPR029061">
    <property type="entry name" value="THDP-binding"/>
</dbReference>
<dbReference type="InterPro" id="IPR012001">
    <property type="entry name" value="Thiamin_PyroP_enz_TPP-bd_dom"/>
</dbReference>
<dbReference type="InterPro" id="IPR011766">
    <property type="entry name" value="TPP_enzyme_TPP-bd"/>
</dbReference>
<dbReference type="NCBIfam" id="TIGR00173">
    <property type="entry name" value="menD"/>
    <property type="match status" value="1"/>
</dbReference>
<dbReference type="PANTHER" id="PTHR42916">
    <property type="entry name" value="2-SUCCINYL-5-ENOLPYRUVYL-6-HYDROXY-3-CYCLOHEXENE-1-CARBOXYLATE SYNTHASE"/>
    <property type="match status" value="1"/>
</dbReference>
<dbReference type="PANTHER" id="PTHR42916:SF1">
    <property type="entry name" value="PROTEIN PHYLLO, CHLOROPLASTIC"/>
    <property type="match status" value="1"/>
</dbReference>
<dbReference type="Pfam" id="PF02775">
    <property type="entry name" value="TPP_enzyme_C"/>
    <property type="match status" value="1"/>
</dbReference>
<dbReference type="Pfam" id="PF16582">
    <property type="entry name" value="TPP_enzyme_M_2"/>
    <property type="match status" value="1"/>
</dbReference>
<dbReference type="Pfam" id="PF02776">
    <property type="entry name" value="TPP_enzyme_N"/>
    <property type="match status" value="1"/>
</dbReference>
<dbReference type="PIRSF" id="PIRSF004983">
    <property type="entry name" value="MenD"/>
    <property type="match status" value="1"/>
</dbReference>
<dbReference type="SUPFAM" id="SSF52467">
    <property type="entry name" value="DHS-like NAD/FAD-binding domain"/>
    <property type="match status" value="1"/>
</dbReference>
<dbReference type="SUPFAM" id="SSF52518">
    <property type="entry name" value="Thiamin diphosphate-binding fold (THDP-binding)"/>
    <property type="match status" value="2"/>
</dbReference>
<sequence>MSAPNQNTLWARTFVSELAASGVDTVCISPGSRSTPLTVAFDRHDSIETFSHLDERSAAYFALGRARRTGSVTPVVCTSGTAAANYHPAVIEASQARVPLLVLTADRPPELHDSGANQTVDQTKLYGDAVRWFHDIGEPEPTARKLRSLRTTAARSIMTATDTPAGPVHLNFPFRKPLEPTPVPGDIPDDLSEESITGRDGAFVESTTGNRVLDENSVNRIAQSLSTSRGLIVVGPMTIPGVDPEAVAAFAHASGFPVLADPLSGIRYGGLTRTTPIIGGYDGYLTSELWDQWPDPDVVLRFGASPTSKPLRQYLESTSPTQYLVDPAGEWREATFTATDIVVADPTQLLWQLSRALNTPGSSTWRQRWIEADKAHTDVLANTDSSAHQSLAATNSDSSTDDIIENTDEEGSNESDRWFCEGRILSDVMTAAPDPATIFVSNSMPVRDLDRFGSPTTQNRTVLGNRGASGIDGIISTALGAGSALATTEHLIAITGDLAYYHDMNGLAALERCDVTATIVLINNDGGGIFHKLPIESYDPPFTTQFVTPHGLDFEPTEDIYDLSFARVRGTDRDGFHTAFTEATTTTGSHVIEVVTDSESSHRVREQLHDRVIKRILDN</sequence>
<feature type="chain" id="PRO_0000341899" description="2-succinyl-5-enolpyruvyl-6-hydroxy-3-cyclohexene-1-carboxylate synthase">
    <location>
        <begin position="1"/>
        <end position="619"/>
    </location>
</feature>
<feature type="region of interest" description="Disordered" evidence="2">
    <location>
        <begin position="385"/>
        <end position="415"/>
    </location>
</feature>
<feature type="compositionally biased region" description="Polar residues" evidence="2">
    <location>
        <begin position="385"/>
        <end position="398"/>
    </location>
</feature>
<feature type="compositionally biased region" description="Acidic residues" evidence="2">
    <location>
        <begin position="399"/>
        <end position="413"/>
    </location>
</feature>
<proteinExistence type="inferred from homology"/>
<accession>Q18J11</accession>
<evidence type="ECO:0000255" key="1">
    <source>
        <dbReference type="HAMAP-Rule" id="MF_01659"/>
    </source>
</evidence>
<evidence type="ECO:0000256" key="2">
    <source>
        <dbReference type="SAM" id="MobiDB-lite"/>
    </source>
</evidence>
<gene>
    <name evidence="1" type="primary">menD</name>
    <name type="ordered locus">HQ_1873A</name>
</gene>
<organism>
    <name type="scientific">Haloquadratum walsbyi (strain DSM 16790 / HBSQ001)</name>
    <dbReference type="NCBI Taxonomy" id="362976"/>
    <lineage>
        <taxon>Archaea</taxon>
        <taxon>Methanobacteriati</taxon>
        <taxon>Methanobacteriota</taxon>
        <taxon>Stenosarchaea group</taxon>
        <taxon>Halobacteria</taxon>
        <taxon>Halobacteriales</taxon>
        <taxon>Haloferacaceae</taxon>
        <taxon>Haloquadratum</taxon>
    </lineage>
</organism>
<comment type="function">
    <text evidence="1">Catalyzes the thiamine diphosphate-dependent decarboxylation of 2-oxoglutarate and the subsequent addition of the resulting succinic semialdehyde-thiamine pyrophosphate anion to isochorismate to yield 2-succinyl-5-enolpyruvyl-6-hydroxy-3-cyclohexene-1-carboxylate (SEPHCHC).</text>
</comment>
<comment type="catalytic activity">
    <reaction evidence="1">
        <text>isochorismate + 2-oxoglutarate + H(+) = 5-enolpyruvoyl-6-hydroxy-2-succinyl-cyclohex-3-ene-1-carboxylate + CO2</text>
        <dbReference type="Rhea" id="RHEA:25593"/>
        <dbReference type="ChEBI" id="CHEBI:15378"/>
        <dbReference type="ChEBI" id="CHEBI:16526"/>
        <dbReference type="ChEBI" id="CHEBI:16810"/>
        <dbReference type="ChEBI" id="CHEBI:29780"/>
        <dbReference type="ChEBI" id="CHEBI:58818"/>
        <dbReference type="EC" id="2.2.1.9"/>
    </reaction>
</comment>
<comment type="cofactor">
    <cofactor evidence="1">
        <name>Mg(2+)</name>
        <dbReference type="ChEBI" id="CHEBI:18420"/>
    </cofactor>
    <cofactor evidence="1">
        <name>Mn(2+)</name>
        <dbReference type="ChEBI" id="CHEBI:29035"/>
    </cofactor>
</comment>
<comment type="cofactor">
    <cofactor evidence="1">
        <name>thiamine diphosphate</name>
        <dbReference type="ChEBI" id="CHEBI:58937"/>
    </cofactor>
    <text evidence="1">Binds 1 thiamine pyrophosphate per subunit.</text>
</comment>
<comment type="pathway">
    <text evidence="1">Quinol/quinone metabolism; 1,4-dihydroxy-2-naphthoate biosynthesis; 1,4-dihydroxy-2-naphthoate from chorismate: step 2/7.</text>
</comment>
<comment type="pathway">
    <text evidence="1">Quinol/quinone metabolism; menaquinone biosynthesis.</text>
</comment>
<comment type="subunit">
    <text evidence="1">Homodimer.</text>
</comment>
<comment type="similarity">
    <text evidence="1">Belongs to the TPP enzyme family. MenD subfamily.</text>
</comment>
<name>MEND_HALWD</name>
<reference key="1">
    <citation type="journal article" date="2006" name="BMC Genomics">
        <title>The genome of the square archaeon Haloquadratum walsbyi: life at the limits of water activity.</title>
        <authorList>
            <person name="Bolhuis H."/>
            <person name="Palm P."/>
            <person name="Wende A."/>
            <person name="Falb M."/>
            <person name="Rampp M."/>
            <person name="Rodriguez-Valera F."/>
            <person name="Pfeiffer F."/>
            <person name="Oesterhelt D."/>
        </authorList>
    </citation>
    <scope>NUCLEOTIDE SEQUENCE [LARGE SCALE GENOMIC DNA]</scope>
    <source>
        <strain>DSM 16790 / HBSQ001</strain>
    </source>
</reference>